<name>PV21_POMMA</name>
<proteinExistence type="evidence at protein level"/>
<comment type="function">
    <text evidence="1 4 5">The egg defensive protein perivitellin-2 is a pore-forming two-subunit glycoprotein that affects both the nervous and digestive systems of mammals (PubMed:32231667, PubMed:32446810). In addition, it is a source of both structural and energetic molecules during embryonic development (By similarity). The tachylectin subunit (31 kDa) binds target membranes while the MACPF subunit (67 kDa) disrupts lipid bilayers forming large pores (inner diameter of about 5.6 nm) altering the plasma membrance conductance (PubMed:32446810). Both in vivo and in vitro, the protein shows wide pH range stability and is resistant to enzymatic proteolysis from gastrointestinal environments (PubMed:32231667). It is cytotoxic to both epithelial and immune cells from the digestive system of mammals (PubMed:32231667). It induces enterocyte death by a lytic mechanism and disrupts enterocyte monolayers in a dose-dependent manner (PubMed:32231667). After oral administration to mice, it binds enterocytes and induces large dose-dependent morphological changes on their small intestine mucosa, reducing the absorptive surface (PubMed:32231667). Additionally, it is detected in the Peyer's patches where it activates lymphoid follicles and triggers apoptosis (PubMed:32231667). The toxin can also traverse the intestinal barrier and induce oral adaptive immunity with evidence of circulating antibody response (PubMed:32231667). The toxin also shows hemagglutination properties thanks to the tachylectin subunit, but has no hemolytic activity (PubMed:32446810). In addition to enterotoxin activity, the toxin also acts as a neurotoxin, since an intraperitoneal injection can induce paralysis of the mice rear limbs, followed by death (PubMed:32446810).</text>
</comment>
<comment type="subunit">
    <text evidence="5">Perivitellin-2 is a dimer of heterodimers held together head-to-tail by non-covalent forces. The heterodimer is composed of the tachylectin subunit (31 kDa) and the MACPF subunit (67 kDa) that are disulfide-linked.</text>
</comment>
<comment type="subcellular location">
    <subcellularLocation>
        <location evidence="9">Secreted</location>
    </subcellularLocation>
    <subcellularLocation>
        <location evidence="4 5">Target cell membrane</location>
    </subcellularLocation>
</comment>
<comment type="tissue specificity">
    <text evidence="10">Produced by albumen secretory cells. Found in developing eggs.</text>
</comment>
<comment type="PTM">
    <text evidence="1">PV2 is a very high density lipoprotein (VHDL). It contains 3.75% of lipids. The major lipid classes are free sterols and phospholipids and also have significant quantities of energy-providing triacylglycerides and free fatty acids.</text>
</comment>
<comment type="toxic dose">
    <text evidence="5">LD(50) is 250 ug/kg by intraperitoneal injection into mice.</text>
</comment>
<protein>
    <recommendedName>
        <fullName evidence="6">Perivitellin-2 67 kDa subunit</fullName>
        <shortName evidence="9">PmPV2 67 kDa subunit</shortName>
        <shortName evidence="7 8">PmPV2-67</shortName>
    </recommendedName>
    <alternativeName>
        <fullName evidence="8">PV2 MACPF 'A' toxic subunit</fullName>
    </alternativeName>
    <alternativeName>
        <fullName evidence="7">Pma_3499_0.31</fullName>
    </alternativeName>
    <alternativeName>
        <fullName evidence="8">Pore forming toxin</fullName>
        <shortName evidence="8">PFT</shortName>
    </alternativeName>
</protein>
<evidence type="ECO:0000250" key="1">
    <source>
        <dbReference type="UniProtKB" id="P0C8G6"/>
    </source>
</evidence>
<evidence type="ECO:0000255" key="2"/>
<evidence type="ECO:0000255" key="3">
    <source>
        <dbReference type="PROSITE-ProRule" id="PRU00745"/>
    </source>
</evidence>
<evidence type="ECO:0000269" key="4">
    <source>
    </source>
</evidence>
<evidence type="ECO:0000269" key="5">
    <source>
    </source>
</evidence>
<evidence type="ECO:0000303" key="6">
    <source>
    </source>
</evidence>
<evidence type="ECO:0000303" key="7">
    <source>
    </source>
</evidence>
<evidence type="ECO:0000303" key="8">
    <source>
    </source>
</evidence>
<evidence type="ECO:0000305" key="9"/>
<evidence type="ECO:0000305" key="10">
    <source>
    </source>
</evidence>
<evidence type="ECO:0000305" key="11">
    <source>
    </source>
</evidence>
<evidence type="ECO:0000305" key="12">
    <source>
    </source>
</evidence>
<dbReference type="GO" id="GO:0005576">
    <property type="term" value="C:extracellular region"/>
    <property type="evidence" value="ECO:0007669"/>
    <property type="project" value="UniProtKB-SubCell"/>
</dbReference>
<dbReference type="GO" id="GO:0016020">
    <property type="term" value="C:membrane"/>
    <property type="evidence" value="ECO:0007669"/>
    <property type="project" value="UniProtKB-KW"/>
</dbReference>
<dbReference type="GO" id="GO:0044218">
    <property type="term" value="C:other organism cell membrane"/>
    <property type="evidence" value="ECO:0007669"/>
    <property type="project" value="UniProtKB-KW"/>
</dbReference>
<dbReference type="GO" id="GO:0045735">
    <property type="term" value="F:nutrient reservoir activity"/>
    <property type="evidence" value="ECO:0007669"/>
    <property type="project" value="UniProtKB-KW"/>
</dbReference>
<dbReference type="GO" id="GO:0090729">
    <property type="term" value="F:toxin activity"/>
    <property type="evidence" value="ECO:0007669"/>
    <property type="project" value="UniProtKB-KW"/>
</dbReference>
<dbReference type="GO" id="GO:0022829">
    <property type="term" value="F:wide pore channel activity"/>
    <property type="evidence" value="ECO:0007669"/>
    <property type="project" value="TreeGrafter"/>
</dbReference>
<dbReference type="GO" id="GO:0051607">
    <property type="term" value="P:defense response to virus"/>
    <property type="evidence" value="ECO:0007669"/>
    <property type="project" value="TreeGrafter"/>
</dbReference>
<dbReference type="InterPro" id="IPR020864">
    <property type="entry name" value="MACPF"/>
</dbReference>
<dbReference type="InterPro" id="IPR020863">
    <property type="entry name" value="MACPF_CS"/>
</dbReference>
<dbReference type="InterPro" id="IPR052784">
    <property type="entry name" value="Perforin-1_pore-forming"/>
</dbReference>
<dbReference type="PANTHER" id="PTHR46096">
    <property type="entry name" value="PERFORIN-1"/>
    <property type="match status" value="1"/>
</dbReference>
<dbReference type="PANTHER" id="PTHR46096:SF3">
    <property type="entry name" value="PERFORIN-1"/>
    <property type="match status" value="1"/>
</dbReference>
<dbReference type="Pfam" id="PF01823">
    <property type="entry name" value="MACPF"/>
    <property type="match status" value="1"/>
</dbReference>
<dbReference type="SMART" id="SM00457">
    <property type="entry name" value="MACPF"/>
    <property type="match status" value="1"/>
</dbReference>
<dbReference type="PROSITE" id="PS00279">
    <property type="entry name" value="MACPF_1"/>
    <property type="match status" value="1"/>
</dbReference>
<dbReference type="PROSITE" id="PS51412">
    <property type="entry name" value="MACPF_2"/>
    <property type="match status" value="1"/>
</dbReference>
<sequence>MSQLRWWVVSQVLLLIAICSLDHSEGARVCPKIVPGLDKLRVGVDITKLDLLPLFDLGDNGFRSAVADYTCDRGQTAVVDGESFDVPDQVDSVVIESSGQQTSSVTTIKSESQISQALSISAGISVETAKAGFSSSASYAEMQEAITKYGRTVSQMSAVYTTCSANLSPNLLLGQNPLQTLSRLPSDFTADTQGYYDFIKTYGTHYFNKGKLGGMFLFTSETDMSYFQNKNSQQIEATVKATFASILSTETGGSSDESKEVIEFKESSLITSKFFGGQTNLAADGLTKWQPTIAKLPYFMSGTLSTISSLIADTTKRASMELAVKNYLLKAKVANLDRLTYIRLNSWSVGHNELRDLSAQLQNLKTKTIFSDADEKLLQSIEDQVSVPAWFSDRTTFCFRSTAVGSADQCNGQSTNTLCAEPNRYTQQYMDKTYLGDTGCRLVWKISTTESTDWFKSVKVNFRWYPTWSPCACGPVGTPFTISAPANSWTQDYLDVTNPKFGECMLQWMIEVPPTATLWAKNLEFCIDFTCGKKKQCVDANQWTEPYLDISAHEACGMSWALIAK</sequence>
<keyword id="KW-1015">Disulfide bond</keyword>
<keyword id="KW-0260">Enterotoxin</keyword>
<keyword id="KW-0348">Hemagglutinin</keyword>
<keyword id="KW-0449">Lipoprotein</keyword>
<keyword id="KW-0472">Membrane</keyword>
<keyword id="KW-0528">Neurotoxin</keyword>
<keyword id="KW-0964">Secreted</keyword>
<keyword id="KW-0732">Signal</keyword>
<keyword id="KW-0758">Storage protein</keyword>
<keyword id="KW-1052">Target cell membrane</keyword>
<keyword id="KW-1053">Target membrane</keyword>
<keyword id="KW-0800">Toxin</keyword>
<feature type="signal peptide" evidence="2">
    <location>
        <begin position="1"/>
        <end position="26"/>
    </location>
</feature>
<feature type="chain" id="PRO_0000452119" description="Perivitellin-2 67 kDa subunit" evidence="10 11">
    <location>
        <begin position="27"/>
        <end position="565"/>
    </location>
</feature>
<feature type="domain" description="MACPF" evidence="3">
    <location>
        <begin position="27"/>
        <end position="340"/>
    </location>
</feature>
<feature type="region of interest" description="Invertebrate MACPF Accessory Domain (IMAD)" evidence="12">
    <location>
        <begin position="387"/>
        <end position="565"/>
    </location>
</feature>
<feature type="disulfide bond" description="Interchain" evidence="5">
    <location>
        <position position="398"/>
    </location>
</feature>
<organism>
    <name type="scientific">Pomacea maculata</name>
    <name type="common">Giant applesnail</name>
    <dbReference type="NCBI Taxonomy" id="1245466"/>
    <lineage>
        <taxon>Eukaryota</taxon>
        <taxon>Metazoa</taxon>
        <taxon>Spiralia</taxon>
        <taxon>Lophotrochozoa</taxon>
        <taxon>Mollusca</taxon>
        <taxon>Gastropoda</taxon>
        <taxon>Caenogastropoda</taxon>
        <taxon>Architaenioglossa</taxon>
        <taxon>Ampullarioidea</taxon>
        <taxon>Ampullariidae</taxon>
        <taxon>Pomacea</taxon>
    </lineage>
</organism>
<reference key="1">
    <citation type="journal article" date="2018" name="BMC Genomics">
        <title>AmpuBase: a transcriptome database for eight species of apple snails (Gastropoda: Ampullariidae).</title>
        <authorList>
            <person name="Ip J.C.H."/>
            <person name="Mu H."/>
            <person name="Chen Q."/>
            <person name="Sun J."/>
            <person name="Ituarte S."/>
            <person name="Heras H."/>
            <person name="Van Bocxlaer B."/>
            <person name="Ganmanee M."/>
            <person name="Huang X."/>
            <person name="Qiu J.W."/>
        </authorList>
    </citation>
    <scope>NUCLEOTIDE SEQUENCE [MRNA]</scope>
    <source>
        <tissue>Albumen gland</tissue>
    </source>
</reference>
<reference key="2">
    <citation type="journal article" date="2019" name="Mol. Biol. Evol.">
        <title>Signatures of divergence, invasiveness, and terrestrialization revealed by four apple snail genomes.</title>
        <authorList>
            <person name="Sun J."/>
            <person name="Mu H."/>
            <person name="Ip J.C.H."/>
            <person name="Li R."/>
            <person name="Xu T."/>
            <person name="Accorsi A."/>
            <person name="Sanchez Alvarado A."/>
            <person name="Ross E."/>
            <person name="Lan Y."/>
            <person name="Sun Y."/>
            <person name="Castro-Vazquez A."/>
            <person name="Vega I.A."/>
            <person name="Heras H."/>
            <person name="Ituarte S."/>
            <person name="Van Bocxlaer B."/>
            <person name="Hayes K.A."/>
            <person name="Cowie R.H."/>
            <person name="Zhao Z."/>
            <person name="Zhang Y."/>
            <person name="Qian P.Y."/>
            <person name="Qiu J.W."/>
        </authorList>
    </citation>
    <scope>NUCLEOTIDE SEQUENCE [LARGE SCALE GENOMIC DNA]</scope>
</reference>
<reference key="3">
    <citation type="journal article" date="2020" name="Front. Immunol.">
        <title>Novel role for animal innate immune molecules: enterotoxic activity of a snail egg MACPF-toxin.</title>
        <authorList>
            <person name="Giglio M.L."/>
            <person name="Ituarte S."/>
            <person name="Ibanez A.E."/>
            <person name="Dreon M.S."/>
            <person name="Prieto E."/>
            <person name="Fernandez P.E."/>
            <person name="Heras H."/>
        </authorList>
    </citation>
    <scope>FUNCTION</scope>
    <scope>SUBCELLULAR LOCATION</scope>
</reference>
<reference key="4">
    <citation type="journal article" date="2020" name="J. Struct. Biol.">
        <title>Exaptation of two ancient immune proteins into a new dimeric pore-forming toxin in snails.</title>
        <authorList>
            <person name="Giglio M.L."/>
            <person name="Ituarte S."/>
            <person name="Milesi V."/>
            <person name="Dreon M.S."/>
            <person name="Brola T.R."/>
            <person name="Caramelo J."/>
            <person name="Ip J.C.H."/>
            <person name="Mate S."/>
            <person name="Qiu J.W."/>
            <person name="Otero L.H."/>
            <person name="Heras H."/>
        </authorList>
    </citation>
    <scope>FUNCTION</scope>
    <scope>TOXIC DOSE</scope>
    <scope>SUBCELLULAR LOCATION</scope>
    <scope>SUBUNIT</scope>
    <scope>DISULFIDE BOND</scope>
    <scope>3D-STRUCTURE MODELING</scope>
</reference>
<accession>P0DQO9</accession>